<keyword id="KW-0963">Cytoplasm</keyword>
<keyword id="KW-0251">Elongation factor</keyword>
<keyword id="KW-0342">GTP-binding</keyword>
<keyword id="KW-0547">Nucleotide-binding</keyword>
<keyword id="KW-0648">Protein biosynthesis</keyword>
<accession>Q0SMG2</accession>
<accession>G0IRE6</accession>
<feature type="chain" id="PRO_0000263431" description="Elongation factor G 2">
    <location>
        <begin position="1"/>
        <end position="669"/>
    </location>
</feature>
<feature type="domain" description="tr-type G" evidence="2">
    <location>
        <begin position="1"/>
        <end position="276"/>
    </location>
</feature>
<feature type="binding site" evidence="1">
    <location>
        <begin position="10"/>
        <end position="17"/>
    </location>
    <ligand>
        <name>GTP</name>
        <dbReference type="ChEBI" id="CHEBI:37565"/>
    </ligand>
</feature>
<feature type="binding site" evidence="1">
    <location>
        <begin position="74"/>
        <end position="78"/>
    </location>
    <ligand>
        <name>GTP</name>
        <dbReference type="ChEBI" id="CHEBI:37565"/>
    </ligand>
</feature>
<feature type="binding site" evidence="1">
    <location>
        <begin position="128"/>
        <end position="131"/>
    </location>
    <ligand>
        <name>GTP</name>
        <dbReference type="ChEBI" id="CHEBI:37565"/>
    </ligand>
</feature>
<organism>
    <name type="scientific">Borreliella afzelii (strain PKo)</name>
    <name type="common">Borrelia afzelii</name>
    <dbReference type="NCBI Taxonomy" id="390236"/>
    <lineage>
        <taxon>Bacteria</taxon>
        <taxon>Pseudomonadati</taxon>
        <taxon>Spirochaetota</taxon>
        <taxon>Spirochaetia</taxon>
        <taxon>Spirochaetales</taxon>
        <taxon>Borreliaceae</taxon>
        <taxon>Borreliella</taxon>
    </lineage>
</organism>
<dbReference type="EMBL" id="CP000395">
    <property type="protein sequence ID" value="ABH01966.1"/>
    <property type="molecule type" value="Genomic_DNA"/>
</dbReference>
<dbReference type="EMBL" id="CP002933">
    <property type="protein sequence ID" value="AEL69912.1"/>
    <property type="molecule type" value="Genomic_DNA"/>
</dbReference>
<dbReference type="RefSeq" id="WP_011601171.1">
    <property type="nucleotide sequence ID" value="NC_008277.1"/>
</dbReference>
<dbReference type="SMR" id="Q0SMG2"/>
<dbReference type="STRING" id="29518.BLA32_00775"/>
<dbReference type="KEGG" id="baf:BAPKO_0736"/>
<dbReference type="KEGG" id="bafz:BafPKo_0717"/>
<dbReference type="PATRIC" id="fig|390236.22.peg.684"/>
<dbReference type="eggNOG" id="COG0480">
    <property type="taxonomic scope" value="Bacteria"/>
</dbReference>
<dbReference type="HOGENOM" id="CLU_002794_4_1_12"/>
<dbReference type="OrthoDB" id="9804431at2"/>
<dbReference type="Proteomes" id="UP000005216">
    <property type="component" value="Chromosome"/>
</dbReference>
<dbReference type="GO" id="GO:0005737">
    <property type="term" value="C:cytoplasm"/>
    <property type="evidence" value="ECO:0007669"/>
    <property type="project" value="UniProtKB-SubCell"/>
</dbReference>
<dbReference type="GO" id="GO:0005525">
    <property type="term" value="F:GTP binding"/>
    <property type="evidence" value="ECO:0007669"/>
    <property type="project" value="UniProtKB-UniRule"/>
</dbReference>
<dbReference type="GO" id="GO:0003924">
    <property type="term" value="F:GTPase activity"/>
    <property type="evidence" value="ECO:0007669"/>
    <property type="project" value="InterPro"/>
</dbReference>
<dbReference type="GO" id="GO:0003746">
    <property type="term" value="F:translation elongation factor activity"/>
    <property type="evidence" value="ECO:0007669"/>
    <property type="project" value="UniProtKB-UniRule"/>
</dbReference>
<dbReference type="GO" id="GO:0032790">
    <property type="term" value="P:ribosome disassembly"/>
    <property type="evidence" value="ECO:0007669"/>
    <property type="project" value="TreeGrafter"/>
</dbReference>
<dbReference type="CDD" id="cd01886">
    <property type="entry name" value="EF-G"/>
    <property type="match status" value="1"/>
</dbReference>
<dbReference type="CDD" id="cd16262">
    <property type="entry name" value="EFG_III"/>
    <property type="match status" value="1"/>
</dbReference>
<dbReference type="CDD" id="cd01680">
    <property type="entry name" value="EFG_like_IV"/>
    <property type="match status" value="1"/>
</dbReference>
<dbReference type="CDD" id="cd03713">
    <property type="entry name" value="EFG_mtEFG_C"/>
    <property type="match status" value="1"/>
</dbReference>
<dbReference type="CDD" id="cd04088">
    <property type="entry name" value="EFG_mtEFG_II"/>
    <property type="match status" value="1"/>
</dbReference>
<dbReference type="FunFam" id="3.30.70.240:FF:000001">
    <property type="entry name" value="Elongation factor G"/>
    <property type="match status" value="1"/>
</dbReference>
<dbReference type="FunFam" id="3.40.50.300:FF:000029">
    <property type="entry name" value="Elongation factor G"/>
    <property type="match status" value="1"/>
</dbReference>
<dbReference type="FunFam" id="3.30.70.870:FF:000002">
    <property type="entry name" value="Translation elongation factor 2"/>
    <property type="match status" value="1"/>
</dbReference>
<dbReference type="Gene3D" id="3.30.230.10">
    <property type="match status" value="1"/>
</dbReference>
<dbReference type="Gene3D" id="3.30.70.240">
    <property type="match status" value="1"/>
</dbReference>
<dbReference type="Gene3D" id="3.30.70.870">
    <property type="entry name" value="Elongation Factor G (Translational Gtpase), domain 3"/>
    <property type="match status" value="1"/>
</dbReference>
<dbReference type="Gene3D" id="3.40.50.300">
    <property type="entry name" value="P-loop containing nucleotide triphosphate hydrolases"/>
    <property type="match status" value="1"/>
</dbReference>
<dbReference type="Gene3D" id="2.40.30.10">
    <property type="entry name" value="Translation factors"/>
    <property type="match status" value="1"/>
</dbReference>
<dbReference type="HAMAP" id="MF_00054_B">
    <property type="entry name" value="EF_G_EF_2_B"/>
    <property type="match status" value="1"/>
</dbReference>
<dbReference type="InterPro" id="IPR053905">
    <property type="entry name" value="EF-G-like_DII"/>
</dbReference>
<dbReference type="InterPro" id="IPR041095">
    <property type="entry name" value="EFG_II"/>
</dbReference>
<dbReference type="InterPro" id="IPR009022">
    <property type="entry name" value="EFG_III"/>
</dbReference>
<dbReference type="InterPro" id="IPR035647">
    <property type="entry name" value="EFG_III/V"/>
</dbReference>
<dbReference type="InterPro" id="IPR035649">
    <property type="entry name" value="EFG_V"/>
</dbReference>
<dbReference type="InterPro" id="IPR000640">
    <property type="entry name" value="EFG_V-like"/>
</dbReference>
<dbReference type="InterPro" id="IPR031157">
    <property type="entry name" value="G_TR_CS"/>
</dbReference>
<dbReference type="InterPro" id="IPR027417">
    <property type="entry name" value="P-loop_NTPase"/>
</dbReference>
<dbReference type="InterPro" id="IPR020568">
    <property type="entry name" value="Ribosomal_Su5_D2-typ_SF"/>
</dbReference>
<dbReference type="InterPro" id="IPR014721">
    <property type="entry name" value="Ribsml_uS5_D2-typ_fold_subgr"/>
</dbReference>
<dbReference type="InterPro" id="IPR005225">
    <property type="entry name" value="Small_GTP-bd"/>
</dbReference>
<dbReference type="InterPro" id="IPR000795">
    <property type="entry name" value="T_Tr_GTP-bd_dom"/>
</dbReference>
<dbReference type="InterPro" id="IPR009000">
    <property type="entry name" value="Transl_B-barrel_sf"/>
</dbReference>
<dbReference type="InterPro" id="IPR004540">
    <property type="entry name" value="Transl_elong_EFG/EF2"/>
</dbReference>
<dbReference type="InterPro" id="IPR005517">
    <property type="entry name" value="Transl_elong_EFG/EF2_IV"/>
</dbReference>
<dbReference type="NCBIfam" id="TIGR00484">
    <property type="entry name" value="EF-G"/>
    <property type="match status" value="1"/>
</dbReference>
<dbReference type="NCBIfam" id="TIGR00231">
    <property type="entry name" value="small_GTP"/>
    <property type="match status" value="1"/>
</dbReference>
<dbReference type="PANTHER" id="PTHR43261:SF1">
    <property type="entry name" value="RIBOSOME-RELEASING FACTOR 2, MITOCHONDRIAL"/>
    <property type="match status" value="1"/>
</dbReference>
<dbReference type="PANTHER" id="PTHR43261">
    <property type="entry name" value="TRANSLATION ELONGATION FACTOR G-RELATED"/>
    <property type="match status" value="1"/>
</dbReference>
<dbReference type="Pfam" id="PF22042">
    <property type="entry name" value="EF-G_D2"/>
    <property type="match status" value="1"/>
</dbReference>
<dbReference type="Pfam" id="PF00679">
    <property type="entry name" value="EFG_C"/>
    <property type="match status" value="1"/>
</dbReference>
<dbReference type="Pfam" id="PF14492">
    <property type="entry name" value="EFG_III"/>
    <property type="match status" value="1"/>
</dbReference>
<dbReference type="Pfam" id="PF03764">
    <property type="entry name" value="EFG_IV"/>
    <property type="match status" value="1"/>
</dbReference>
<dbReference type="Pfam" id="PF00009">
    <property type="entry name" value="GTP_EFTU"/>
    <property type="match status" value="1"/>
</dbReference>
<dbReference type="PRINTS" id="PR00315">
    <property type="entry name" value="ELONGATNFCT"/>
</dbReference>
<dbReference type="SMART" id="SM00838">
    <property type="entry name" value="EFG_C"/>
    <property type="match status" value="1"/>
</dbReference>
<dbReference type="SMART" id="SM00889">
    <property type="entry name" value="EFG_IV"/>
    <property type="match status" value="1"/>
</dbReference>
<dbReference type="SUPFAM" id="SSF54980">
    <property type="entry name" value="EF-G C-terminal domain-like"/>
    <property type="match status" value="2"/>
</dbReference>
<dbReference type="SUPFAM" id="SSF52540">
    <property type="entry name" value="P-loop containing nucleoside triphosphate hydrolases"/>
    <property type="match status" value="1"/>
</dbReference>
<dbReference type="SUPFAM" id="SSF54211">
    <property type="entry name" value="Ribosomal protein S5 domain 2-like"/>
    <property type="match status" value="1"/>
</dbReference>
<dbReference type="SUPFAM" id="SSF50447">
    <property type="entry name" value="Translation proteins"/>
    <property type="match status" value="1"/>
</dbReference>
<dbReference type="PROSITE" id="PS00301">
    <property type="entry name" value="G_TR_1"/>
    <property type="match status" value="1"/>
</dbReference>
<dbReference type="PROSITE" id="PS51722">
    <property type="entry name" value="G_TR_2"/>
    <property type="match status" value="1"/>
</dbReference>
<name>EFG2_BORAP</name>
<protein>
    <recommendedName>
        <fullName>Elongation factor G 2</fullName>
        <shortName>EF-G 2</shortName>
    </recommendedName>
</protein>
<reference key="1">
    <citation type="journal article" date="2006" name="BMC Genomics">
        <title>Comparative genome analysis: selection pressure on the Borrelia vls cassettes is essential for infectivity.</title>
        <authorList>
            <person name="Gloeckner G."/>
            <person name="Schulte-Spechtel U."/>
            <person name="Schilhabel M."/>
            <person name="Felder M."/>
            <person name="Suehnel J."/>
            <person name="Wilske B."/>
            <person name="Platzer M."/>
        </authorList>
    </citation>
    <scope>NUCLEOTIDE SEQUENCE [LARGE SCALE GENOMIC DNA]</scope>
    <source>
        <strain>PKo</strain>
    </source>
</reference>
<reference key="2">
    <citation type="journal article" date="2011" name="J. Bacteriol.">
        <title>Whole-genome sequences of two Borrelia afzelii and two Borrelia garinii Lyme disease agent isolates.</title>
        <authorList>
            <person name="Casjens S.R."/>
            <person name="Mongodin E.F."/>
            <person name="Qiu W.G."/>
            <person name="Dunn J.J."/>
            <person name="Luft B.J."/>
            <person name="Fraser-Liggett C.M."/>
            <person name="Schutzer S.E."/>
        </authorList>
    </citation>
    <scope>NUCLEOTIDE SEQUENCE [LARGE SCALE GENOMIC DNA]</scope>
    <source>
        <strain>PKo</strain>
    </source>
</reference>
<comment type="function">
    <text evidence="1">Catalyzes the GTP-dependent ribosomal translocation step during translation elongation. During this step, the ribosome changes from the pre-translocational (PRE) to the post-translocational (POST) state as the newly formed A-site-bound peptidyl-tRNA and P-site-bound deacylated tRNA move to the P and E sites, respectively. Catalyzes the coordinated movement of the two tRNA molecules, the mRNA and conformational changes in the ribosome (By similarity).</text>
</comment>
<comment type="subcellular location">
    <subcellularLocation>
        <location evidence="1">Cytoplasm</location>
    </subcellularLocation>
</comment>
<comment type="similarity">
    <text evidence="2">Belongs to the TRAFAC class translation factor GTPase superfamily. Classic translation factor GTPase family. EF-G/EF-2 subfamily.</text>
</comment>
<gene>
    <name type="primary">fusA2</name>
    <name type="ordered locus">BAPKO_0736</name>
    <name type="ordered locus">BafPKo_0717</name>
</gene>
<evidence type="ECO:0000250" key="1"/>
<evidence type="ECO:0000255" key="2">
    <source>
        <dbReference type="PROSITE-ProRule" id="PRU01059"/>
    </source>
</evidence>
<proteinExistence type="inferred from homology"/>
<sequence>MGIRNIGIMAHIDAGKTTTTERIIYYTGKSHKMGDVDSGNTITDWMPQEQERGITISSAAITCHWKEHQINIIDTPGHVDFTAEVERSLRVLDGGIVIFSAVDGIQAQTETVWKQAEKYEIPRLAYVNKMDRVGANFFKVVEDIENKFKTIPLVLQIPIGNESNFEGVVDIILNKELHFAMENGIPKLTYSQIREEFIEKTALFKKKLIDILSQFSEEITQLFLEDKEISLDVIKSEIRRGTISRFIIPVLMGTSLKNIGIEPLIDSIVDYLPSPFEKSFTAFSLDTNKKILVDPNENKKLSALVFKVQYSSVIAAHLYFVRVYSGEINSNKKIFNASNGKREKFTKIFRVFSNKNEQIDFVKTGDIGAVLGLKFSVTGDTLIEENNNILLESVMFPEPVVLMSVEPERSSDEVRLKEIFEIISKEDPTFSYSESKETGQLIISGMGELHLEIILTRIKDEFNLNVYTGKPQVSYRESAGKIVKEVFEFNNIFAGKNINFKIGMIIKPLSRGEGNKIDFECSIDSTIKSAILRGITTTFVSGAFGYPIIDINVIIFSIVCEISKISESVFESISGFAFHSIFQKSDPIRLEPIMLLEIRTPIEHTGEIISTLNVIGGVIHSVSNIGEYDLIKSEAAFEKLFGYASILRSSTKGRGSFTMEFSYFKEKVS</sequence>